<organism>
    <name type="scientific">Escherichia coli O6:H1 (strain CFT073 / ATCC 700928 / UPEC)</name>
    <dbReference type="NCBI Taxonomy" id="199310"/>
    <lineage>
        <taxon>Bacteria</taxon>
        <taxon>Pseudomonadati</taxon>
        <taxon>Pseudomonadota</taxon>
        <taxon>Gammaproteobacteria</taxon>
        <taxon>Enterobacterales</taxon>
        <taxon>Enterobacteriaceae</taxon>
        <taxon>Escherichia</taxon>
    </lineage>
</organism>
<name>SAPF_ECOL6</name>
<evidence type="ECO:0000250" key="1"/>
<evidence type="ECO:0000255" key="2">
    <source>
        <dbReference type="PROSITE-ProRule" id="PRU00434"/>
    </source>
</evidence>
<evidence type="ECO:0000305" key="3"/>
<feature type="chain" id="PRO_0000092969" description="Peptide transport system ATP-binding protein SapF">
    <location>
        <begin position="1"/>
        <end position="268"/>
    </location>
</feature>
<feature type="domain" description="ABC transporter" evidence="2">
    <location>
        <begin position="6"/>
        <end position="251"/>
    </location>
</feature>
<feature type="binding site" evidence="2">
    <location>
        <begin position="47"/>
        <end position="54"/>
    </location>
    <ligand>
        <name>ATP</name>
        <dbReference type="ChEBI" id="CHEBI:30616"/>
    </ligand>
</feature>
<gene>
    <name type="primary">sapF</name>
    <name type="ordered locus">c1767</name>
</gene>
<reference key="1">
    <citation type="journal article" date="2002" name="Proc. Natl. Acad. Sci. U.S.A.">
        <title>Extensive mosaic structure revealed by the complete genome sequence of uropathogenic Escherichia coli.</title>
        <authorList>
            <person name="Welch R.A."/>
            <person name="Burland V."/>
            <person name="Plunkett G. III"/>
            <person name="Redford P."/>
            <person name="Roesch P."/>
            <person name="Rasko D."/>
            <person name="Buckles E.L."/>
            <person name="Liou S.-R."/>
            <person name="Boutin A."/>
            <person name="Hackett J."/>
            <person name="Stroud D."/>
            <person name="Mayhew G.F."/>
            <person name="Rose D.J."/>
            <person name="Zhou S."/>
            <person name="Schwartz D.C."/>
            <person name="Perna N.T."/>
            <person name="Mobley H.L.T."/>
            <person name="Donnenberg M.S."/>
            <person name="Blattner F.R."/>
        </authorList>
    </citation>
    <scope>NUCLEOTIDE SEQUENCE [LARGE SCALE GENOMIC DNA]</scope>
    <source>
        <strain>CFT073 / ATCC 700928 / UPEC</strain>
    </source>
</reference>
<sequence>MIETLLEVRNLSKTFRYRTGWFRRQTVEAVKPLSFTLREGQTLAIIGENGSGKSTLAKMLAGMIEPTSGELLIDDHPLHFGDYSFRSQRIRMIFQDPSTSLNPRQRISQILDFPLRLNTDLEPEQRRKQIIETMRMVGLLPDHVSYYPHMLAPGQKQRLGLARALILRPKVIIADEALASLDMSMRSQLINLMLELQEKQGISYIYVTQHIGMMKHISDQVLVMHQGEVVERGSTADVLASPLHELTKRLIAGHFGEALTADAWRKDR</sequence>
<keyword id="KW-0067">ATP-binding</keyword>
<keyword id="KW-0997">Cell inner membrane</keyword>
<keyword id="KW-1003">Cell membrane</keyword>
<keyword id="KW-0472">Membrane</keyword>
<keyword id="KW-0547">Nucleotide-binding</keyword>
<keyword id="KW-0571">Peptide transport</keyword>
<keyword id="KW-0653">Protein transport</keyword>
<keyword id="KW-1185">Reference proteome</keyword>
<keyword id="KW-0813">Transport</keyword>
<comment type="function">
    <text evidence="1">Involved in a peptide intake transport system that plays a role in the resistance to antimicrobial peptides.</text>
</comment>
<comment type="subcellular location">
    <subcellularLocation>
        <location evidence="3">Cell inner membrane</location>
        <topology evidence="3">Peripheral membrane protein</topology>
    </subcellularLocation>
</comment>
<comment type="similarity">
    <text evidence="3">Belongs to the ABC transporter superfamily.</text>
</comment>
<proteinExistence type="inferred from homology"/>
<protein>
    <recommendedName>
        <fullName>Peptide transport system ATP-binding protein SapF</fullName>
    </recommendedName>
</protein>
<dbReference type="EMBL" id="AE014075">
    <property type="protein sequence ID" value="AAN80233.1"/>
    <property type="molecule type" value="Genomic_DNA"/>
</dbReference>
<dbReference type="RefSeq" id="WP_000573407.1">
    <property type="nucleotide sequence ID" value="NZ_CP051263.1"/>
</dbReference>
<dbReference type="SMR" id="P0AAH9"/>
<dbReference type="STRING" id="199310.c1767"/>
<dbReference type="GeneID" id="93775415"/>
<dbReference type="KEGG" id="ecc:c1767"/>
<dbReference type="eggNOG" id="COG4172">
    <property type="taxonomic scope" value="Bacteria"/>
</dbReference>
<dbReference type="HOGENOM" id="CLU_000604_1_23_6"/>
<dbReference type="BioCyc" id="ECOL199310:C1767-MONOMER"/>
<dbReference type="Proteomes" id="UP000001410">
    <property type="component" value="Chromosome"/>
</dbReference>
<dbReference type="GO" id="GO:0005886">
    <property type="term" value="C:plasma membrane"/>
    <property type="evidence" value="ECO:0007669"/>
    <property type="project" value="UniProtKB-SubCell"/>
</dbReference>
<dbReference type="GO" id="GO:0005524">
    <property type="term" value="F:ATP binding"/>
    <property type="evidence" value="ECO:0007669"/>
    <property type="project" value="UniProtKB-KW"/>
</dbReference>
<dbReference type="GO" id="GO:0016887">
    <property type="term" value="F:ATP hydrolysis activity"/>
    <property type="evidence" value="ECO:0007669"/>
    <property type="project" value="InterPro"/>
</dbReference>
<dbReference type="GO" id="GO:0015833">
    <property type="term" value="P:peptide transport"/>
    <property type="evidence" value="ECO:0007669"/>
    <property type="project" value="UniProtKB-KW"/>
</dbReference>
<dbReference type="GO" id="GO:0015031">
    <property type="term" value="P:protein transport"/>
    <property type="evidence" value="ECO:0007669"/>
    <property type="project" value="UniProtKB-KW"/>
</dbReference>
<dbReference type="GO" id="GO:0055085">
    <property type="term" value="P:transmembrane transport"/>
    <property type="evidence" value="ECO:0007669"/>
    <property type="project" value="UniProtKB-ARBA"/>
</dbReference>
<dbReference type="CDD" id="cd03257">
    <property type="entry name" value="ABC_NikE_OppD_transporters"/>
    <property type="match status" value="1"/>
</dbReference>
<dbReference type="FunFam" id="3.40.50.300:FF:000301">
    <property type="entry name" value="Peptide transport system ATP-binding protein sapF"/>
    <property type="match status" value="1"/>
</dbReference>
<dbReference type="Gene3D" id="3.40.50.300">
    <property type="entry name" value="P-loop containing nucleotide triphosphate hydrolases"/>
    <property type="match status" value="1"/>
</dbReference>
<dbReference type="InterPro" id="IPR003593">
    <property type="entry name" value="AAA+_ATPase"/>
</dbReference>
<dbReference type="InterPro" id="IPR050319">
    <property type="entry name" value="ABC_transp_ATP-bind"/>
</dbReference>
<dbReference type="InterPro" id="IPR003439">
    <property type="entry name" value="ABC_transporter-like_ATP-bd"/>
</dbReference>
<dbReference type="InterPro" id="IPR017871">
    <property type="entry name" value="ABC_transporter-like_CS"/>
</dbReference>
<dbReference type="InterPro" id="IPR027417">
    <property type="entry name" value="P-loop_NTPase"/>
</dbReference>
<dbReference type="NCBIfam" id="NF011692">
    <property type="entry name" value="PRK15112.1"/>
    <property type="match status" value="1"/>
</dbReference>
<dbReference type="PANTHER" id="PTHR43776:SF4">
    <property type="entry name" value="PUTRESCINE EXPORT SYSTEM ATP-BINDING PROTEIN SAPF"/>
    <property type="match status" value="1"/>
</dbReference>
<dbReference type="PANTHER" id="PTHR43776">
    <property type="entry name" value="TRANSPORT ATP-BINDING PROTEIN"/>
    <property type="match status" value="1"/>
</dbReference>
<dbReference type="Pfam" id="PF00005">
    <property type="entry name" value="ABC_tran"/>
    <property type="match status" value="1"/>
</dbReference>
<dbReference type="SMART" id="SM00382">
    <property type="entry name" value="AAA"/>
    <property type="match status" value="1"/>
</dbReference>
<dbReference type="SUPFAM" id="SSF52540">
    <property type="entry name" value="P-loop containing nucleoside triphosphate hydrolases"/>
    <property type="match status" value="1"/>
</dbReference>
<dbReference type="PROSITE" id="PS00211">
    <property type="entry name" value="ABC_TRANSPORTER_1"/>
    <property type="match status" value="1"/>
</dbReference>
<dbReference type="PROSITE" id="PS50893">
    <property type="entry name" value="ABC_TRANSPORTER_2"/>
    <property type="match status" value="1"/>
</dbReference>
<accession>P0AAH9</accession>
<accession>P36637</accession>